<reference key="1">
    <citation type="journal article" date="2009" name="J. Bacteriol.">
        <title>Complete genome sequence of Haemophilus parasuis SH0165.</title>
        <authorList>
            <person name="Yue M."/>
            <person name="Yang F."/>
            <person name="Yang J."/>
            <person name="Bei W."/>
            <person name="Cai X."/>
            <person name="Chen L."/>
            <person name="Dong J."/>
            <person name="Zhou R."/>
            <person name="Jin M."/>
            <person name="Jin Q."/>
            <person name="Chen H."/>
        </authorList>
    </citation>
    <scope>NUCLEOTIDE SEQUENCE [LARGE SCALE GENOMIC DNA]</scope>
    <source>
        <strain>SH0165</strain>
    </source>
</reference>
<name>GRPE_GLAP5</name>
<proteinExistence type="inferred from homology"/>
<organism>
    <name type="scientific">Glaesserella parasuis serovar 5 (strain SH0165)</name>
    <name type="common">Haemophilus parasuis</name>
    <dbReference type="NCBI Taxonomy" id="557723"/>
    <lineage>
        <taxon>Bacteria</taxon>
        <taxon>Pseudomonadati</taxon>
        <taxon>Pseudomonadota</taxon>
        <taxon>Gammaproteobacteria</taxon>
        <taxon>Pasteurellales</taxon>
        <taxon>Pasteurellaceae</taxon>
        <taxon>Glaesserella</taxon>
    </lineage>
</organism>
<sequence length="199" mass="22154">MTNQTEKEQVEQDVSQATELAQEAQEAQTQDVEPELQQNNEIDPLEEAIARVQELEAYIAEADKREQDIQLRARAEVENIRRRAEQDVEKAHKFALEKFSKEMLTVVDNLERGLQALEGVDESVKSGVELTHKGLVSTLNNFGVEAVGVVGEAFNPELHQAISMQPAEGIEANHISVVLQKGYTLHGRVIRPAMVMVAS</sequence>
<keyword id="KW-0143">Chaperone</keyword>
<keyword id="KW-0963">Cytoplasm</keyword>
<keyword id="KW-1185">Reference proteome</keyword>
<keyword id="KW-0346">Stress response</keyword>
<dbReference type="EMBL" id="CP001321">
    <property type="protein sequence ID" value="ACL33192.1"/>
    <property type="molecule type" value="Genomic_DNA"/>
</dbReference>
<dbReference type="RefSeq" id="WP_005712850.1">
    <property type="nucleotide sequence ID" value="NC_011852.1"/>
</dbReference>
<dbReference type="SMR" id="B8F790"/>
<dbReference type="STRING" id="557723.HAPS_1647"/>
<dbReference type="GeneID" id="66619797"/>
<dbReference type="KEGG" id="hap:HAPS_1647"/>
<dbReference type="HOGENOM" id="CLU_057217_6_0_6"/>
<dbReference type="Proteomes" id="UP000006743">
    <property type="component" value="Chromosome"/>
</dbReference>
<dbReference type="GO" id="GO:0005829">
    <property type="term" value="C:cytosol"/>
    <property type="evidence" value="ECO:0007669"/>
    <property type="project" value="TreeGrafter"/>
</dbReference>
<dbReference type="GO" id="GO:0000774">
    <property type="term" value="F:adenyl-nucleotide exchange factor activity"/>
    <property type="evidence" value="ECO:0007669"/>
    <property type="project" value="InterPro"/>
</dbReference>
<dbReference type="GO" id="GO:0042803">
    <property type="term" value="F:protein homodimerization activity"/>
    <property type="evidence" value="ECO:0007669"/>
    <property type="project" value="InterPro"/>
</dbReference>
<dbReference type="GO" id="GO:0051087">
    <property type="term" value="F:protein-folding chaperone binding"/>
    <property type="evidence" value="ECO:0007669"/>
    <property type="project" value="InterPro"/>
</dbReference>
<dbReference type="GO" id="GO:0051082">
    <property type="term" value="F:unfolded protein binding"/>
    <property type="evidence" value="ECO:0007669"/>
    <property type="project" value="TreeGrafter"/>
</dbReference>
<dbReference type="GO" id="GO:0006457">
    <property type="term" value="P:protein folding"/>
    <property type="evidence" value="ECO:0007669"/>
    <property type="project" value="InterPro"/>
</dbReference>
<dbReference type="CDD" id="cd00446">
    <property type="entry name" value="GrpE"/>
    <property type="match status" value="1"/>
</dbReference>
<dbReference type="FunFam" id="2.30.22.10:FF:000001">
    <property type="entry name" value="Protein GrpE"/>
    <property type="match status" value="1"/>
</dbReference>
<dbReference type="Gene3D" id="3.90.20.20">
    <property type="match status" value="1"/>
</dbReference>
<dbReference type="Gene3D" id="2.30.22.10">
    <property type="entry name" value="Head domain of nucleotide exchange factor GrpE"/>
    <property type="match status" value="1"/>
</dbReference>
<dbReference type="HAMAP" id="MF_01151">
    <property type="entry name" value="GrpE"/>
    <property type="match status" value="1"/>
</dbReference>
<dbReference type="InterPro" id="IPR000740">
    <property type="entry name" value="GrpE"/>
</dbReference>
<dbReference type="InterPro" id="IPR013805">
    <property type="entry name" value="GrpE_coiled_coil"/>
</dbReference>
<dbReference type="InterPro" id="IPR009012">
    <property type="entry name" value="GrpE_head"/>
</dbReference>
<dbReference type="NCBIfam" id="NF010737">
    <property type="entry name" value="PRK14139.1"/>
    <property type="match status" value="1"/>
</dbReference>
<dbReference type="NCBIfam" id="NF010738">
    <property type="entry name" value="PRK14140.1"/>
    <property type="match status" value="1"/>
</dbReference>
<dbReference type="NCBIfam" id="NF010748">
    <property type="entry name" value="PRK14150.1"/>
    <property type="match status" value="1"/>
</dbReference>
<dbReference type="PANTHER" id="PTHR21237">
    <property type="entry name" value="GRPE PROTEIN"/>
    <property type="match status" value="1"/>
</dbReference>
<dbReference type="PANTHER" id="PTHR21237:SF23">
    <property type="entry name" value="GRPE PROTEIN HOMOLOG, MITOCHONDRIAL"/>
    <property type="match status" value="1"/>
</dbReference>
<dbReference type="Pfam" id="PF01025">
    <property type="entry name" value="GrpE"/>
    <property type="match status" value="1"/>
</dbReference>
<dbReference type="PRINTS" id="PR00773">
    <property type="entry name" value="GRPEPROTEIN"/>
</dbReference>
<dbReference type="SUPFAM" id="SSF58014">
    <property type="entry name" value="Coiled-coil domain of nucleotide exchange factor GrpE"/>
    <property type="match status" value="1"/>
</dbReference>
<dbReference type="SUPFAM" id="SSF51064">
    <property type="entry name" value="Head domain of nucleotide exchange factor GrpE"/>
    <property type="match status" value="1"/>
</dbReference>
<dbReference type="PROSITE" id="PS01071">
    <property type="entry name" value="GRPE"/>
    <property type="match status" value="1"/>
</dbReference>
<protein>
    <recommendedName>
        <fullName evidence="1">Protein GrpE</fullName>
    </recommendedName>
    <alternativeName>
        <fullName evidence="1">HSP-70 cofactor</fullName>
    </alternativeName>
</protein>
<evidence type="ECO:0000255" key="1">
    <source>
        <dbReference type="HAMAP-Rule" id="MF_01151"/>
    </source>
</evidence>
<evidence type="ECO:0000256" key="2">
    <source>
        <dbReference type="SAM" id="MobiDB-lite"/>
    </source>
</evidence>
<comment type="function">
    <text evidence="1">Participates actively in the response to hyperosmotic and heat shock by preventing the aggregation of stress-denatured proteins, in association with DnaK and GrpE. It is the nucleotide exchange factor for DnaK and may function as a thermosensor. Unfolded proteins bind initially to DnaJ; upon interaction with the DnaJ-bound protein, DnaK hydrolyzes its bound ATP, resulting in the formation of a stable complex. GrpE releases ADP from DnaK; ATP binding to DnaK triggers the release of the substrate protein, thus completing the reaction cycle. Several rounds of ATP-dependent interactions between DnaJ, DnaK and GrpE are required for fully efficient folding.</text>
</comment>
<comment type="subunit">
    <text evidence="1">Homodimer.</text>
</comment>
<comment type="subcellular location">
    <subcellularLocation>
        <location evidence="1">Cytoplasm</location>
    </subcellularLocation>
</comment>
<comment type="similarity">
    <text evidence="1">Belongs to the GrpE family.</text>
</comment>
<gene>
    <name evidence="1" type="primary">grpE</name>
    <name type="ordered locus">HAPS_1647</name>
</gene>
<accession>B8F790</accession>
<feature type="chain" id="PRO_1000164194" description="Protein GrpE">
    <location>
        <begin position="1"/>
        <end position="199"/>
    </location>
</feature>
<feature type="region of interest" description="Disordered" evidence="2">
    <location>
        <begin position="1"/>
        <end position="44"/>
    </location>
</feature>
<feature type="compositionally biased region" description="Basic and acidic residues" evidence="2">
    <location>
        <begin position="1"/>
        <end position="10"/>
    </location>
</feature>
<feature type="compositionally biased region" description="Low complexity" evidence="2">
    <location>
        <begin position="16"/>
        <end position="30"/>
    </location>
</feature>